<gene>
    <name evidence="1" type="primary">leuB</name>
    <name type="ordered locus">CA_C3171</name>
</gene>
<organism>
    <name type="scientific">Clostridium acetobutylicum (strain ATCC 824 / DSM 792 / JCM 1419 / IAM 19013 / LMG 5710 / NBRC 13948 / NRRL B-527 / VKM B-1787 / 2291 / W)</name>
    <dbReference type="NCBI Taxonomy" id="272562"/>
    <lineage>
        <taxon>Bacteria</taxon>
        <taxon>Bacillati</taxon>
        <taxon>Bacillota</taxon>
        <taxon>Clostridia</taxon>
        <taxon>Eubacteriales</taxon>
        <taxon>Clostridiaceae</taxon>
        <taxon>Clostridium</taxon>
    </lineage>
</organism>
<dbReference type="EC" id="1.1.1.85" evidence="1"/>
<dbReference type="EMBL" id="AE001437">
    <property type="protein sequence ID" value="AAK81108.1"/>
    <property type="molecule type" value="Genomic_DNA"/>
</dbReference>
<dbReference type="PIR" id="A97290">
    <property type="entry name" value="A97290"/>
</dbReference>
<dbReference type="RefSeq" id="NP_349768.1">
    <property type="nucleotide sequence ID" value="NC_003030.1"/>
</dbReference>
<dbReference type="RefSeq" id="WP_010966448.1">
    <property type="nucleotide sequence ID" value="NC_003030.1"/>
</dbReference>
<dbReference type="SMR" id="Q97EE2"/>
<dbReference type="STRING" id="272562.CA_C3171"/>
<dbReference type="GeneID" id="44999659"/>
<dbReference type="KEGG" id="cac:CA_C3171"/>
<dbReference type="PATRIC" id="fig|272562.8.peg.3352"/>
<dbReference type="eggNOG" id="COG0473">
    <property type="taxonomic scope" value="Bacteria"/>
</dbReference>
<dbReference type="HOGENOM" id="CLU_031953_0_3_9"/>
<dbReference type="OrthoDB" id="9806254at2"/>
<dbReference type="UniPathway" id="UPA00048">
    <property type="reaction ID" value="UER00072"/>
</dbReference>
<dbReference type="Proteomes" id="UP000000814">
    <property type="component" value="Chromosome"/>
</dbReference>
<dbReference type="GO" id="GO:0005829">
    <property type="term" value="C:cytosol"/>
    <property type="evidence" value="ECO:0007669"/>
    <property type="project" value="TreeGrafter"/>
</dbReference>
<dbReference type="GO" id="GO:0003862">
    <property type="term" value="F:3-isopropylmalate dehydrogenase activity"/>
    <property type="evidence" value="ECO:0007669"/>
    <property type="project" value="UniProtKB-UniRule"/>
</dbReference>
<dbReference type="GO" id="GO:0000287">
    <property type="term" value="F:magnesium ion binding"/>
    <property type="evidence" value="ECO:0007669"/>
    <property type="project" value="InterPro"/>
</dbReference>
<dbReference type="GO" id="GO:0051287">
    <property type="term" value="F:NAD binding"/>
    <property type="evidence" value="ECO:0007669"/>
    <property type="project" value="InterPro"/>
</dbReference>
<dbReference type="GO" id="GO:0009098">
    <property type="term" value="P:L-leucine biosynthetic process"/>
    <property type="evidence" value="ECO:0007669"/>
    <property type="project" value="UniProtKB-UniRule"/>
</dbReference>
<dbReference type="FunFam" id="3.40.718.10:FF:000028">
    <property type="entry name" value="3-isopropylmalate dehydrogenase"/>
    <property type="match status" value="1"/>
</dbReference>
<dbReference type="Gene3D" id="3.40.718.10">
    <property type="entry name" value="Isopropylmalate Dehydrogenase"/>
    <property type="match status" value="1"/>
</dbReference>
<dbReference type="HAMAP" id="MF_01033">
    <property type="entry name" value="LeuB_type1"/>
    <property type="match status" value="1"/>
</dbReference>
<dbReference type="InterPro" id="IPR019818">
    <property type="entry name" value="IsoCit/isopropylmalate_DH_CS"/>
</dbReference>
<dbReference type="InterPro" id="IPR024084">
    <property type="entry name" value="IsoPropMal-DH-like_dom"/>
</dbReference>
<dbReference type="InterPro" id="IPR004429">
    <property type="entry name" value="Isopropylmalate_DH"/>
</dbReference>
<dbReference type="NCBIfam" id="TIGR00169">
    <property type="entry name" value="leuB"/>
    <property type="match status" value="1"/>
</dbReference>
<dbReference type="PANTHER" id="PTHR42979">
    <property type="entry name" value="3-ISOPROPYLMALATE DEHYDROGENASE"/>
    <property type="match status" value="1"/>
</dbReference>
<dbReference type="PANTHER" id="PTHR42979:SF1">
    <property type="entry name" value="3-ISOPROPYLMALATE DEHYDROGENASE"/>
    <property type="match status" value="1"/>
</dbReference>
<dbReference type="Pfam" id="PF00180">
    <property type="entry name" value="Iso_dh"/>
    <property type="match status" value="1"/>
</dbReference>
<dbReference type="SMART" id="SM01329">
    <property type="entry name" value="Iso_dh"/>
    <property type="match status" value="1"/>
</dbReference>
<dbReference type="SUPFAM" id="SSF53659">
    <property type="entry name" value="Isocitrate/Isopropylmalate dehydrogenase-like"/>
    <property type="match status" value="1"/>
</dbReference>
<dbReference type="PROSITE" id="PS00470">
    <property type="entry name" value="IDH_IMDH"/>
    <property type="match status" value="1"/>
</dbReference>
<comment type="function">
    <text evidence="1">Catalyzes the oxidation of 3-carboxy-2-hydroxy-4-methylpentanoate (3-isopropylmalate) to 3-carboxy-4-methyl-2-oxopentanoate. The product decarboxylates to 4-methyl-2 oxopentanoate.</text>
</comment>
<comment type="catalytic activity">
    <reaction evidence="1">
        <text>(2R,3S)-3-isopropylmalate + NAD(+) = 4-methyl-2-oxopentanoate + CO2 + NADH</text>
        <dbReference type="Rhea" id="RHEA:32271"/>
        <dbReference type="ChEBI" id="CHEBI:16526"/>
        <dbReference type="ChEBI" id="CHEBI:17865"/>
        <dbReference type="ChEBI" id="CHEBI:35121"/>
        <dbReference type="ChEBI" id="CHEBI:57540"/>
        <dbReference type="ChEBI" id="CHEBI:57945"/>
        <dbReference type="EC" id="1.1.1.85"/>
    </reaction>
</comment>
<comment type="cofactor">
    <cofactor evidence="1">
        <name>Mg(2+)</name>
        <dbReference type="ChEBI" id="CHEBI:18420"/>
    </cofactor>
    <cofactor evidence="1">
        <name>Mn(2+)</name>
        <dbReference type="ChEBI" id="CHEBI:29035"/>
    </cofactor>
    <text evidence="1">Binds 1 Mg(2+) or Mn(2+) ion per subunit.</text>
</comment>
<comment type="pathway">
    <text evidence="1">Amino-acid biosynthesis; L-leucine biosynthesis; L-leucine from 3-methyl-2-oxobutanoate: step 3/4.</text>
</comment>
<comment type="subunit">
    <text evidence="1">Homodimer.</text>
</comment>
<comment type="subcellular location">
    <subcellularLocation>
        <location evidence="1">Cytoplasm</location>
    </subcellularLocation>
</comment>
<comment type="similarity">
    <text evidence="1">Belongs to the isocitrate and isopropylmalate dehydrogenases family. LeuB type 1 subfamily.</text>
</comment>
<keyword id="KW-0028">Amino-acid biosynthesis</keyword>
<keyword id="KW-0100">Branched-chain amino acid biosynthesis</keyword>
<keyword id="KW-0963">Cytoplasm</keyword>
<keyword id="KW-0432">Leucine biosynthesis</keyword>
<keyword id="KW-0460">Magnesium</keyword>
<keyword id="KW-0464">Manganese</keyword>
<keyword id="KW-0479">Metal-binding</keyword>
<keyword id="KW-0520">NAD</keyword>
<keyword id="KW-0560">Oxidoreductase</keyword>
<keyword id="KW-1185">Reference proteome</keyword>
<accession>Q97EE2</accession>
<proteinExistence type="inferred from homology"/>
<evidence type="ECO:0000255" key="1">
    <source>
        <dbReference type="HAMAP-Rule" id="MF_01033"/>
    </source>
</evidence>
<name>LEU3_CLOAB</name>
<reference key="1">
    <citation type="journal article" date="2001" name="J. Bacteriol.">
        <title>Genome sequence and comparative analysis of the solvent-producing bacterium Clostridium acetobutylicum.</title>
        <authorList>
            <person name="Noelling J."/>
            <person name="Breton G."/>
            <person name="Omelchenko M.V."/>
            <person name="Makarova K.S."/>
            <person name="Zeng Q."/>
            <person name="Gibson R."/>
            <person name="Lee H.M."/>
            <person name="Dubois J."/>
            <person name="Qiu D."/>
            <person name="Hitti J."/>
            <person name="Wolf Y.I."/>
            <person name="Tatusov R.L."/>
            <person name="Sabathe F."/>
            <person name="Doucette-Stamm L.A."/>
            <person name="Soucaille P."/>
            <person name="Daly M.J."/>
            <person name="Bennett G.N."/>
            <person name="Koonin E.V."/>
            <person name="Smith D.R."/>
        </authorList>
    </citation>
    <scope>NUCLEOTIDE SEQUENCE [LARGE SCALE GENOMIC DNA]</scope>
    <source>
        <strain>ATCC 824 / DSM 792 / JCM 1419 / IAM 19013 / LMG 5710 / NBRC 13948 / NRRL B-527 / VKM B-1787 / 2291 / W</strain>
    </source>
</reference>
<sequence length="357" mass="38980">MKEYKVAVIPGDGIGVEIVGEALKVLEKVGAKYDTKFNFTEVKAGGCAIDEFGVPLPNETLEICKNSDAVLLGAVGGPKWDTLPGEKRPEKALMGLRGGLGLYANLRPAKVYDILKSASPLKEEIINKGVDLLVVRELTGGIYFGERGRDIQNGINSAYDTERYNVEEIKRIAHVAFKAALKRNKKVTSVDKANILESSRLWRETVTEVAKEYPEVELNYLYVDNAAMQLVREPSQFDVIVTSNIFGDILTDEASMVTGSIGMLPSASLRNDTFGMYEPIHGSAPDIAGQDLANPLAQILSVAMMLEYSFNMTEAARDVEDAVEKVLNSGYRTGDIYTEGSKKVGTKEMGKLVLAEL</sequence>
<feature type="chain" id="PRO_0000083680" description="3-isopropylmalate dehydrogenase">
    <location>
        <begin position="1"/>
        <end position="357"/>
    </location>
</feature>
<feature type="binding site" evidence="1">
    <location>
        <begin position="77"/>
        <end position="90"/>
    </location>
    <ligand>
        <name>NAD(+)</name>
        <dbReference type="ChEBI" id="CHEBI:57540"/>
    </ligand>
</feature>
<feature type="binding site" evidence="1">
    <location>
        <position position="97"/>
    </location>
    <ligand>
        <name>substrate</name>
    </ligand>
</feature>
<feature type="binding site" evidence="1">
    <location>
        <position position="107"/>
    </location>
    <ligand>
        <name>substrate</name>
    </ligand>
</feature>
<feature type="binding site" evidence="1">
    <location>
        <position position="136"/>
    </location>
    <ligand>
        <name>substrate</name>
    </ligand>
</feature>
<feature type="binding site" evidence="1">
    <location>
        <position position="224"/>
    </location>
    <ligand>
        <name>Mg(2+)</name>
        <dbReference type="ChEBI" id="CHEBI:18420"/>
    </ligand>
</feature>
<feature type="binding site" evidence="1">
    <location>
        <position position="224"/>
    </location>
    <ligand>
        <name>substrate</name>
    </ligand>
</feature>
<feature type="binding site" evidence="1">
    <location>
        <position position="248"/>
    </location>
    <ligand>
        <name>Mg(2+)</name>
        <dbReference type="ChEBI" id="CHEBI:18420"/>
    </ligand>
</feature>
<feature type="binding site" evidence="1">
    <location>
        <position position="252"/>
    </location>
    <ligand>
        <name>Mg(2+)</name>
        <dbReference type="ChEBI" id="CHEBI:18420"/>
    </ligand>
</feature>
<feature type="binding site" evidence="1">
    <location>
        <begin position="282"/>
        <end position="294"/>
    </location>
    <ligand>
        <name>NAD(+)</name>
        <dbReference type="ChEBI" id="CHEBI:57540"/>
    </ligand>
</feature>
<feature type="site" description="Important for catalysis" evidence="1">
    <location>
        <position position="143"/>
    </location>
</feature>
<feature type="site" description="Important for catalysis" evidence="1">
    <location>
        <position position="192"/>
    </location>
</feature>
<protein>
    <recommendedName>
        <fullName evidence="1">3-isopropylmalate dehydrogenase</fullName>
        <ecNumber evidence="1">1.1.1.85</ecNumber>
    </recommendedName>
    <alternativeName>
        <fullName evidence="1">3-IPM-DH</fullName>
    </alternativeName>
    <alternativeName>
        <fullName evidence="1">Beta-IPM dehydrogenase</fullName>
        <shortName evidence="1">IMDH</shortName>
    </alternativeName>
</protein>